<sequence>MTQITPQPGIMDIALYQGGAAHVDGVSNVTKLSSNENPLGPSPAAVEAMAEAAATMHRYPSSDHATLRAAIAETHGLDAERIICGAGSDEIIAFLCQCYAGPGDEVLYTEHGFAMYRISALAAGATPVEVKERERVTDVDALLAGCTAQTKLVFIANPNNPTGTMISEAEVARLADGIPEDAILVLDGAYAEYVEGFDAGAQLIAARHNVVMTRTFSKIYGLGGARVGWAYGPQEIIDVLNRVRGPFNVSTTALAGAEAAVRDTDYVQRCRLENAKWRGWLADQLAELGVPSDTSCTNFILARFASQSEAESCDDFLKQRGLIVRRVAGYNLPTALRITIGDETACRAVAAAVKDFKAGAAE</sequence>
<evidence type="ECO:0000255" key="1">
    <source>
        <dbReference type="HAMAP-Rule" id="MF_01023"/>
    </source>
</evidence>
<accession>Q1GET3</accession>
<keyword id="KW-0028">Amino-acid biosynthesis</keyword>
<keyword id="KW-0032">Aminotransferase</keyword>
<keyword id="KW-0368">Histidine biosynthesis</keyword>
<keyword id="KW-0663">Pyridoxal phosphate</keyword>
<keyword id="KW-1185">Reference proteome</keyword>
<keyword id="KW-0808">Transferase</keyword>
<reference key="1">
    <citation type="submission" date="2006-05" db="EMBL/GenBank/DDBJ databases">
        <title>Complete sequence of chromosome of Silicibacter sp. TM1040.</title>
        <authorList>
            <consortium name="US DOE Joint Genome Institute"/>
            <person name="Copeland A."/>
            <person name="Lucas S."/>
            <person name="Lapidus A."/>
            <person name="Barry K."/>
            <person name="Detter J.C."/>
            <person name="Glavina del Rio T."/>
            <person name="Hammon N."/>
            <person name="Israni S."/>
            <person name="Dalin E."/>
            <person name="Tice H."/>
            <person name="Pitluck S."/>
            <person name="Brettin T."/>
            <person name="Bruce D."/>
            <person name="Han C."/>
            <person name="Tapia R."/>
            <person name="Goodwin L."/>
            <person name="Thompson L.S."/>
            <person name="Gilna P."/>
            <person name="Schmutz J."/>
            <person name="Larimer F."/>
            <person name="Land M."/>
            <person name="Hauser L."/>
            <person name="Kyrpides N."/>
            <person name="Kim E."/>
            <person name="Belas R."/>
            <person name="Moran M.A."/>
            <person name="Buchan A."/>
            <person name="Gonzalez J.M."/>
            <person name="Schell M.A."/>
            <person name="Sun F."/>
            <person name="Richardson P."/>
        </authorList>
    </citation>
    <scope>NUCLEOTIDE SEQUENCE [LARGE SCALE GENOMIC DNA]</scope>
    <source>
        <strain>TM1040</strain>
    </source>
</reference>
<gene>
    <name evidence="1" type="primary">hisC</name>
    <name type="ordered locus">TM1040_2101</name>
</gene>
<feature type="chain" id="PRO_1000063501" description="Histidinol-phosphate aminotransferase">
    <location>
        <begin position="1"/>
        <end position="362"/>
    </location>
</feature>
<feature type="modified residue" description="N6-(pyridoxal phosphate)lysine" evidence="1">
    <location>
        <position position="218"/>
    </location>
</feature>
<protein>
    <recommendedName>
        <fullName evidence="1">Histidinol-phosphate aminotransferase</fullName>
        <ecNumber evidence="1">2.6.1.9</ecNumber>
    </recommendedName>
    <alternativeName>
        <fullName evidence="1">Imidazole acetol-phosphate transaminase</fullName>
    </alternativeName>
</protein>
<name>HIS8_RUEST</name>
<comment type="catalytic activity">
    <reaction evidence="1">
        <text>L-histidinol phosphate + 2-oxoglutarate = 3-(imidazol-4-yl)-2-oxopropyl phosphate + L-glutamate</text>
        <dbReference type="Rhea" id="RHEA:23744"/>
        <dbReference type="ChEBI" id="CHEBI:16810"/>
        <dbReference type="ChEBI" id="CHEBI:29985"/>
        <dbReference type="ChEBI" id="CHEBI:57766"/>
        <dbReference type="ChEBI" id="CHEBI:57980"/>
        <dbReference type="EC" id="2.6.1.9"/>
    </reaction>
</comment>
<comment type="cofactor">
    <cofactor evidence="1">
        <name>pyridoxal 5'-phosphate</name>
        <dbReference type="ChEBI" id="CHEBI:597326"/>
    </cofactor>
</comment>
<comment type="pathway">
    <text evidence="1">Amino-acid biosynthesis; L-histidine biosynthesis; L-histidine from 5-phospho-alpha-D-ribose 1-diphosphate: step 7/9.</text>
</comment>
<comment type="subunit">
    <text evidence="1">Homodimer.</text>
</comment>
<comment type="similarity">
    <text evidence="1">Belongs to the class-II pyridoxal-phosphate-dependent aminotransferase family. Histidinol-phosphate aminotransferase subfamily.</text>
</comment>
<dbReference type="EC" id="2.6.1.9" evidence="1"/>
<dbReference type="EMBL" id="CP000377">
    <property type="protein sequence ID" value="ABF64833.1"/>
    <property type="molecule type" value="Genomic_DNA"/>
</dbReference>
<dbReference type="RefSeq" id="WP_011539425.1">
    <property type="nucleotide sequence ID" value="NC_008044.1"/>
</dbReference>
<dbReference type="SMR" id="Q1GET3"/>
<dbReference type="STRING" id="292414.TM1040_2101"/>
<dbReference type="DNASU" id="4077852"/>
<dbReference type="KEGG" id="sit:TM1040_2101"/>
<dbReference type="eggNOG" id="COG0079">
    <property type="taxonomic scope" value="Bacteria"/>
</dbReference>
<dbReference type="HOGENOM" id="CLU_017584_3_3_5"/>
<dbReference type="OrthoDB" id="9809616at2"/>
<dbReference type="UniPathway" id="UPA00031">
    <property type="reaction ID" value="UER00012"/>
</dbReference>
<dbReference type="Proteomes" id="UP000000636">
    <property type="component" value="Chromosome"/>
</dbReference>
<dbReference type="GO" id="GO:0004400">
    <property type="term" value="F:histidinol-phosphate transaminase activity"/>
    <property type="evidence" value="ECO:0007669"/>
    <property type="project" value="UniProtKB-UniRule"/>
</dbReference>
<dbReference type="GO" id="GO:0030170">
    <property type="term" value="F:pyridoxal phosphate binding"/>
    <property type="evidence" value="ECO:0007669"/>
    <property type="project" value="InterPro"/>
</dbReference>
<dbReference type="GO" id="GO:0000105">
    <property type="term" value="P:L-histidine biosynthetic process"/>
    <property type="evidence" value="ECO:0007669"/>
    <property type="project" value="UniProtKB-UniRule"/>
</dbReference>
<dbReference type="CDD" id="cd00609">
    <property type="entry name" value="AAT_like"/>
    <property type="match status" value="1"/>
</dbReference>
<dbReference type="Gene3D" id="3.90.1150.10">
    <property type="entry name" value="Aspartate Aminotransferase, domain 1"/>
    <property type="match status" value="1"/>
</dbReference>
<dbReference type="Gene3D" id="3.40.640.10">
    <property type="entry name" value="Type I PLP-dependent aspartate aminotransferase-like (Major domain)"/>
    <property type="match status" value="1"/>
</dbReference>
<dbReference type="HAMAP" id="MF_01023">
    <property type="entry name" value="HisC_aminotrans_2"/>
    <property type="match status" value="1"/>
</dbReference>
<dbReference type="InterPro" id="IPR004839">
    <property type="entry name" value="Aminotransferase_I/II_large"/>
</dbReference>
<dbReference type="InterPro" id="IPR005861">
    <property type="entry name" value="HisP_aminotrans"/>
</dbReference>
<dbReference type="InterPro" id="IPR050106">
    <property type="entry name" value="HistidinolP_aminotransfase"/>
</dbReference>
<dbReference type="InterPro" id="IPR015424">
    <property type="entry name" value="PyrdxlP-dep_Trfase"/>
</dbReference>
<dbReference type="InterPro" id="IPR015421">
    <property type="entry name" value="PyrdxlP-dep_Trfase_major"/>
</dbReference>
<dbReference type="InterPro" id="IPR015422">
    <property type="entry name" value="PyrdxlP-dep_Trfase_small"/>
</dbReference>
<dbReference type="NCBIfam" id="TIGR01141">
    <property type="entry name" value="hisC"/>
    <property type="match status" value="1"/>
</dbReference>
<dbReference type="PANTHER" id="PTHR43643:SF3">
    <property type="entry name" value="HISTIDINOL-PHOSPHATE AMINOTRANSFERASE"/>
    <property type="match status" value="1"/>
</dbReference>
<dbReference type="PANTHER" id="PTHR43643">
    <property type="entry name" value="HISTIDINOL-PHOSPHATE AMINOTRANSFERASE 2"/>
    <property type="match status" value="1"/>
</dbReference>
<dbReference type="Pfam" id="PF00155">
    <property type="entry name" value="Aminotran_1_2"/>
    <property type="match status" value="1"/>
</dbReference>
<dbReference type="SUPFAM" id="SSF53383">
    <property type="entry name" value="PLP-dependent transferases"/>
    <property type="match status" value="1"/>
</dbReference>
<proteinExistence type="inferred from homology"/>
<organism>
    <name type="scientific">Ruegeria sp. (strain TM1040)</name>
    <name type="common">Silicibacter sp.</name>
    <dbReference type="NCBI Taxonomy" id="292414"/>
    <lineage>
        <taxon>Bacteria</taxon>
        <taxon>Pseudomonadati</taxon>
        <taxon>Pseudomonadota</taxon>
        <taxon>Alphaproteobacteria</taxon>
        <taxon>Rhodobacterales</taxon>
        <taxon>Roseobacteraceae</taxon>
        <taxon>Ruegeria</taxon>
    </lineage>
</organism>